<protein>
    <recommendedName>
        <fullName>Major vault protein</fullName>
    </recommendedName>
</protein>
<comment type="function">
    <text evidence="1">Required for normal vault structure. Vaults are multi-subunit structures that may act as scaffolds for proteins involved in signal transduction. Vaults may also play a role in nucleo-cytoplasmic transport (By similarity).</text>
</comment>
<comment type="subunit">
    <text evidence="1">The vault ribonucleoprotein particle is a huge (400 A x 670 A) cage structure of 12.9 MDa. It consists of a dimer of half-vaults, with each half-vault comprising 39 identical major vault protein (MVP) chains, PARP4 and one or more vault RNAs (vRNAs) (By similarity).</text>
</comment>
<comment type="subcellular location">
    <subcellularLocation>
        <location evidence="1 3">Cytoplasm</location>
    </subcellularLocation>
    <subcellularLocation>
        <location evidence="1">Nucleus</location>
    </subcellularLocation>
</comment>
<gene>
    <name type="ORF">LINJ_05_0060</name>
</gene>
<sequence>MTDSVIRIKRYHYIHILDNNTNVTRTISGPVVYTRKEHETCLFDPCPCVSVPPRHYCVVKNPCVRGEAGEVVLESSGQVKLRLGDSEIRFEGEPFPLYPGEELDCRDGKGVQKLQLIPPNTGLHVRCVRDFKDADRRVGAGTEWMVAGPQTYIPRVEVVVVEEVKATVIYPNTALLVQANVNFTDRCGVPRVAGEKWLVRALGAYLKSVEETVLGLIQGTMLSDLKALRLSAVRSFTDVYGKARRAGEQWQVTLKDAPVHIVDAYETKVADVAAVSLSAKEYVIIHHPVDDTGHNRFGETLVRRGECTFFLQPGETMPRGVEQVLVVGKEEALLLEAVCEYRDGGEKRQPGSRWMVHGPLEYIPANEVKLLEHRRMMALDKNEGIYIMNTTTGEVRAVIGKPYMLDVNEVLWEKHLPLAVEELLESPNGSIQTSERNPGFVSHREKYRIVRFNVQHNAAVQIYDYRKKQPRIVLGPNLVMLAPHEEFTVLSLSGGTPKVPNSLQSLQLFLGPRFSSDTIVVETSDHARLRLRLSYNWYFDIDRANPSRRTFSVPDFIGDCCKTIASRVRGAVAAEDFDSFHRNSAKIIRTAVFGVDEAGETKKNLRFTANDFVVTNIDVQSSEPTDEKTRDSLQKSVQLAIEITTKSQEAAARHGNELKDQEAKGQLERQKLLDKIEVENARTKWLELQAKSEAVQASGQSVAEAKARAEALFIEVRSEMQQAEMRAKAYRISAEAELQKLQQRQALELEYTQRQNEIDVSKARAAAEAEAEKVKRMVDCIGRDTLVAIARAGPETQVKLLSSLGLKGYLITDGNSPVNLFGTAQGMIGEPKK</sequence>
<name>MVP_LEIIN</name>
<evidence type="ECO:0000250" key="1">
    <source>
        <dbReference type="UniProtKB" id="Q14764"/>
    </source>
</evidence>
<evidence type="ECO:0000255" key="2"/>
<evidence type="ECO:0000255" key="3">
    <source>
        <dbReference type="PROSITE-ProRule" id="PRU00571"/>
    </source>
</evidence>
<evidence type="ECO:0000312" key="4">
    <source>
        <dbReference type="EMBL" id="CAM65315.1"/>
    </source>
</evidence>
<accession>A4HSC9</accession>
<organism>
    <name type="scientific">Leishmania infantum</name>
    <dbReference type="NCBI Taxonomy" id="5671"/>
    <lineage>
        <taxon>Eukaryota</taxon>
        <taxon>Discoba</taxon>
        <taxon>Euglenozoa</taxon>
        <taxon>Kinetoplastea</taxon>
        <taxon>Metakinetoplastina</taxon>
        <taxon>Trypanosomatida</taxon>
        <taxon>Trypanosomatidae</taxon>
        <taxon>Leishmaniinae</taxon>
        <taxon>Leishmania</taxon>
    </lineage>
</organism>
<feature type="chain" id="PRO_0000414609" description="Major vault protein">
    <location>
        <begin position="1"/>
        <end position="833"/>
    </location>
</feature>
<feature type="repeat" description="MVP 1" evidence="2">
    <location>
        <begin position="54"/>
        <end position="118"/>
    </location>
</feature>
<feature type="repeat" description="MVP 2" evidence="2">
    <location>
        <begin position="119"/>
        <end position="170"/>
    </location>
</feature>
<feature type="repeat" description="MVP 3" evidence="2">
    <location>
        <begin position="171"/>
        <end position="223"/>
    </location>
</feature>
<feature type="repeat" description="MVP 4" evidence="2">
    <location>
        <begin position="224"/>
        <end position="278"/>
    </location>
</feature>
<feature type="repeat" description="MVP 5" evidence="2">
    <location>
        <begin position="280"/>
        <end position="328"/>
    </location>
</feature>
<feature type="repeat" description="MVP 6" evidence="2">
    <location>
        <begin position="329"/>
        <end position="380"/>
    </location>
</feature>
<feature type="repeat" description="MVP 7" evidence="2">
    <location>
        <begin position="381"/>
        <end position="433"/>
    </location>
</feature>
<keyword id="KW-0963">Cytoplasm</keyword>
<keyword id="KW-0539">Nucleus</keyword>
<keyword id="KW-0597">Phosphoprotein</keyword>
<keyword id="KW-1185">Reference proteome</keyword>
<keyword id="KW-0677">Repeat</keyword>
<keyword id="KW-0687">Ribonucleoprotein</keyword>
<proteinExistence type="inferred from homology"/>
<dbReference type="EMBL" id="FR796437">
    <property type="protein sequence ID" value="CAM65315.1"/>
    <property type="molecule type" value="Genomic_DNA"/>
</dbReference>
<dbReference type="RefSeq" id="XP_001462970.1">
    <property type="nucleotide sequence ID" value="XM_001462933.1"/>
</dbReference>
<dbReference type="SMR" id="A4HSC9"/>
<dbReference type="STRING" id="5671.A4HSC9"/>
<dbReference type="GeneID" id="5066571"/>
<dbReference type="KEGG" id="lif:LINJ_05_0060"/>
<dbReference type="VEuPathDB" id="TriTrypDB:LINF_050005500"/>
<dbReference type="eggNOG" id="ENOG502QPP0">
    <property type="taxonomic scope" value="Eukaryota"/>
</dbReference>
<dbReference type="InParanoid" id="A4HSC9"/>
<dbReference type="OMA" id="VTYRAPH"/>
<dbReference type="Proteomes" id="UP000008153">
    <property type="component" value="Chromosome 5"/>
</dbReference>
<dbReference type="GO" id="GO:0005737">
    <property type="term" value="C:cytoplasm"/>
    <property type="evidence" value="ECO:0007669"/>
    <property type="project" value="UniProtKB-SubCell"/>
</dbReference>
<dbReference type="GO" id="GO:0005634">
    <property type="term" value="C:nucleus"/>
    <property type="evidence" value="ECO:0007669"/>
    <property type="project" value="UniProtKB-SubCell"/>
</dbReference>
<dbReference type="GO" id="GO:1990904">
    <property type="term" value="C:ribonucleoprotein complex"/>
    <property type="evidence" value="ECO:0007669"/>
    <property type="project" value="UniProtKB-KW"/>
</dbReference>
<dbReference type="CDD" id="cd08825">
    <property type="entry name" value="MVP_shoulder"/>
    <property type="match status" value="1"/>
</dbReference>
<dbReference type="FunFam" id="2.30.30.620:FF:000002">
    <property type="entry name" value="Major vault protein"/>
    <property type="match status" value="1"/>
</dbReference>
<dbReference type="FunFam" id="2.30.30.560:FF:000002">
    <property type="entry name" value="Major vault protein-alpha"/>
    <property type="match status" value="1"/>
</dbReference>
<dbReference type="FunFam" id="2.30.30.570:FF:000002">
    <property type="entry name" value="Major vault protein-alpha"/>
    <property type="match status" value="1"/>
</dbReference>
<dbReference type="FunFam" id="2.30.30.550:FF:000001">
    <property type="entry name" value="major vault protein-like"/>
    <property type="match status" value="3"/>
</dbReference>
<dbReference type="FunFam" id="2.30.30.560:FF:000001">
    <property type="entry name" value="major vault protein-like"/>
    <property type="match status" value="1"/>
</dbReference>
<dbReference type="FunFam" id="2.30.30.570:FF:000001">
    <property type="entry name" value="major vault protein-like"/>
    <property type="match status" value="1"/>
</dbReference>
<dbReference type="FunFam" id="3.30.479.30:FF:000010">
    <property type="entry name" value="major vault protein-like"/>
    <property type="match status" value="1"/>
</dbReference>
<dbReference type="Gene3D" id="2.30.30.560">
    <property type="match status" value="2"/>
</dbReference>
<dbReference type="Gene3D" id="2.30.30.570">
    <property type="match status" value="2"/>
</dbReference>
<dbReference type="Gene3D" id="2.30.30.620">
    <property type="match status" value="1"/>
</dbReference>
<dbReference type="Gene3D" id="6.10.250.720">
    <property type="match status" value="1"/>
</dbReference>
<dbReference type="Gene3D" id="6.20.380.10">
    <property type="match status" value="1"/>
</dbReference>
<dbReference type="Gene3D" id="3.30.479.30">
    <property type="entry name" value="Band 7 domain"/>
    <property type="match status" value="1"/>
</dbReference>
<dbReference type="Gene3D" id="2.30.30.550">
    <property type="entry name" value="Major Vault Protein repeat"/>
    <property type="match status" value="4"/>
</dbReference>
<dbReference type="InterPro" id="IPR036013">
    <property type="entry name" value="Band_7/SPFH_dom_sf"/>
</dbReference>
<dbReference type="InterPro" id="IPR039059">
    <property type="entry name" value="MVP"/>
</dbReference>
<dbReference type="InterPro" id="IPR041139">
    <property type="entry name" value="MVP_rep_dom"/>
</dbReference>
<dbReference type="InterPro" id="IPR043023">
    <property type="entry name" value="MVP_rep_sf"/>
</dbReference>
<dbReference type="InterPro" id="IPR021870">
    <property type="entry name" value="MVP_shoulder"/>
</dbReference>
<dbReference type="InterPro" id="IPR041134">
    <property type="entry name" value="Vault_2"/>
</dbReference>
<dbReference type="InterPro" id="IPR043179">
    <property type="entry name" value="Vault_2_sf"/>
</dbReference>
<dbReference type="InterPro" id="IPR040989">
    <property type="entry name" value="Vault_3"/>
</dbReference>
<dbReference type="InterPro" id="IPR041136">
    <property type="entry name" value="Vault_4"/>
</dbReference>
<dbReference type="InterPro" id="IPR002499">
    <property type="entry name" value="Vault_N"/>
</dbReference>
<dbReference type="PANTHER" id="PTHR14165">
    <property type="entry name" value="MAJOR VAULT PROTEIN"/>
    <property type="match status" value="1"/>
</dbReference>
<dbReference type="PANTHER" id="PTHR14165:SF3">
    <property type="entry name" value="MAJOR VAULT PROTEIN"/>
    <property type="match status" value="1"/>
</dbReference>
<dbReference type="Pfam" id="PF11978">
    <property type="entry name" value="MVP_shoulder"/>
    <property type="match status" value="1"/>
</dbReference>
<dbReference type="Pfam" id="PF01505">
    <property type="entry name" value="Vault"/>
    <property type="match status" value="4"/>
</dbReference>
<dbReference type="Pfam" id="PF17794">
    <property type="entry name" value="Vault_2"/>
    <property type="match status" value="1"/>
</dbReference>
<dbReference type="Pfam" id="PF17795">
    <property type="entry name" value="Vault_3"/>
    <property type="match status" value="1"/>
</dbReference>
<dbReference type="Pfam" id="PF17796">
    <property type="entry name" value="Vault_4"/>
    <property type="match status" value="1"/>
</dbReference>
<dbReference type="PROSITE" id="PS51224">
    <property type="entry name" value="MVP"/>
    <property type="match status" value="7"/>
</dbReference>
<reference evidence="4" key="1">
    <citation type="journal article" date="2007" name="Nat. Genet.">
        <title>Comparative genomic analysis of three Leishmania species that cause diverse human disease.</title>
        <authorList>
            <person name="Peacock C.S."/>
            <person name="Seeger K."/>
            <person name="Harris D."/>
            <person name="Murphy L."/>
            <person name="Ruiz J.C."/>
            <person name="Quail M.A."/>
            <person name="Peters N."/>
            <person name="Adlem E."/>
            <person name="Tivey A."/>
            <person name="Aslett M."/>
            <person name="Kerhornou A."/>
            <person name="Ivens A."/>
            <person name="Fraser A."/>
            <person name="Rajandream M.-A."/>
            <person name="Carver T."/>
            <person name="Norbertczak H."/>
            <person name="Chillingworth T."/>
            <person name="Hance Z."/>
            <person name="Jagels K."/>
            <person name="Moule S."/>
            <person name="Ormond D."/>
            <person name="Rutter S."/>
            <person name="Sqaures R."/>
            <person name="Whitehead S."/>
            <person name="Rabbinowitsch E."/>
            <person name="Arrowsmith C."/>
            <person name="White B."/>
            <person name="Thurston S."/>
            <person name="Bringaud F."/>
            <person name="Baldauf S.L."/>
            <person name="Faulconbridge A."/>
            <person name="Jeffares D."/>
            <person name="Depledge D.P."/>
            <person name="Oyola S.O."/>
            <person name="Hilley J.D."/>
            <person name="Brito L.O."/>
            <person name="Tosi L.R.O."/>
            <person name="Barrell B."/>
            <person name="Cruz A.K."/>
            <person name="Mottram J.C."/>
            <person name="Smith D.F."/>
            <person name="Berriman M."/>
        </authorList>
    </citation>
    <scope>NUCLEOTIDE SEQUENCE [LARGE SCALE GENOMIC DNA]</scope>
    <source>
        <strain evidence="4">JPCM5</strain>
    </source>
</reference>